<feature type="chain" id="PRO_0000065536" description="Uncharacterized protein ZK652.8">
    <location>
        <begin position="1"/>
        <end position="171"/>
    </location>
</feature>
<organism>
    <name type="scientific">Caenorhabditis elegans</name>
    <dbReference type="NCBI Taxonomy" id="6239"/>
    <lineage>
        <taxon>Eukaryota</taxon>
        <taxon>Metazoa</taxon>
        <taxon>Ecdysozoa</taxon>
        <taxon>Nematoda</taxon>
        <taxon>Chromadorea</taxon>
        <taxon>Rhabditida</taxon>
        <taxon>Rhabditina</taxon>
        <taxon>Rhabditomorpha</taxon>
        <taxon>Rhabditoidea</taxon>
        <taxon>Rhabditidae</taxon>
        <taxon>Peloderinae</taxon>
        <taxon>Caenorhabditis</taxon>
    </lineage>
</organism>
<proteinExistence type="predicted"/>
<gene>
    <name type="ORF">ZK652.8</name>
</gene>
<reference key="1">
    <citation type="journal article" date="1994" name="Nature">
        <title>2.2 Mb of contiguous nucleotide sequence from chromosome III of C. elegans.</title>
        <authorList>
            <person name="Wilson R."/>
            <person name="Ainscough R."/>
            <person name="Anderson K."/>
            <person name="Baynes C."/>
            <person name="Berks M."/>
            <person name="Bonfield J."/>
            <person name="Burton J."/>
            <person name="Connell M."/>
            <person name="Copsey T."/>
            <person name="Cooper J."/>
            <person name="Coulson A."/>
            <person name="Craxton M."/>
            <person name="Dear S."/>
            <person name="Du Z."/>
            <person name="Durbin R."/>
            <person name="Favello A."/>
            <person name="Fraser A."/>
            <person name="Fulton L."/>
            <person name="Gardner A."/>
            <person name="Green P."/>
            <person name="Hawkins T."/>
            <person name="Hillier L."/>
            <person name="Jier M."/>
            <person name="Johnston L."/>
            <person name="Jones M."/>
            <person name="Kershaw J."/>
            <person name="Kirsten J."/>
            <person name="Laisster N."/>
            <person name="Latreille P."/>
            <person name="Lightning J."/>
            <person name="Lloyd C."/>
            <person name="Mortimore B."/>
            <person name="O'Callaghan M."/>
            <person name="Parsons J."/>
            <person name="Percy C."/>
            <person name="Rifken L."/>
            <person name="Roopra A."/>
            <person name="Saunders D."/>
            <person name="Shownkeen R."/>
            <person name="Sims M."/>
            <person name="Smaldon N."/>
            <person name="Smith A."/>
            <person name="Smith M."/>
            <person name="Sonnhammer E."/>
            <person name="Staden R."/>
            <person name="Sulston J."/>
            <person name="Thierry-Mieg J."/>
            <person name="Thomas K."/>
            <person name="Vaudin M."/>
            <person name="Vaughan K."/>
            <person name="Waterston R."/>
            <person name="Watson A."/>
            <person name="Weinstock L."/>
            <person name="Wilkinson-Sproat J."/>
            <person name="Wohldman P."/>
        </authorList>
    </citation>
    <scope>NUCLEOTIDE SEQUENCE [LARGE SCALE GENOMIC DNA]</scope>
    <source>
        <strain>Bristol N2</strain>
    </source>
</reference>
<reference key="2">
    <citation type="journal article" date="1998" name="Science">
        <title>Genome sequence of the nematode C. elegans: a platform for investigating biology.</title>
        <authorList>
            <consortium name="The C. elegans sequencing consortium"/>
        </authorList>
    </citation>
    <scope>NUCLEOTIDE SEQUENCE [LARGE SCALE GENOMIC DNA]</scope>
    <source>
        <strain>Bristol N2</strain>
    </source>
</reference>
<name>YOY8_CAEEL</name>
<protein>
    <recommendedName>
        <fullName>Uncharacterized protein ZK652.8</fullName>
    </recommendedName>
</protein>
<keyword id="KW-1185">Reference proteome</keyword>
<dbReference type="EMBL" id="FO080278">
    <property type="protein sequence ID" value="CCD62553.1"/>
    <property type="molecule type" value="Genomic_DNA"/>
</dbReference>
<dbReference type="PIR" id="S44906">
    <property type="entry name" value="S44906"/>
</dbReference>
<dbReference type="RefSeq" id="NP_498701.1">
    <property type="nucleotide sequence ID" value="NM_066300.4"/>
</dbReference>
<dbReference type="SMR" id="P34665"/>
<dbReference type="FunCoup" id="P34665">
    <property type="interactions" value="297"/>
</dbReference>
<dbReference type="PaxDb" id="6239-ZK652.8"/>
<dbReference type="EnsemblMetazoa" id="ZK652.8.1">
    <property type="protein sequence ID" value="ZK652.8.1"/>
    <property type="gene ID" value="WBGene00022786"/>
</dbReference>
<dbReference type="GeneID" id="191377"/>
<dbReference type="KEGG" id="cel:CELE_ZK652.8"/>
<dbReference type="UCSC" id="ZK652.8">
    <property type="organism name" value="c. elegans"/>
</dbReference>
<dbReference type="AGR" id="WB:WBGene00022786"/>
<dbReference type="CTD" id="191377"/>
<dbReference type="WormBase" id="ZK652.8">
    <property type="protein sequence ID" value="CE29164"/>
    <property type="gene ID" value="WBGene00022786"/>
</dbReference>
<dbReference type="eggNOG" id="ENOG502SCXN">
    <property type="taxonomic scope" value="Eukaryota"/>
</dbReference>
<dbReference type="HOGENOM" id="CLU_092917_0_0_1"/>
<dbReference type="InParanoid" id="P34665"/>
<dbReference type="OMA" id="RHEIRWK"/>
<dbReference type="OrthoDB" id="5782208at2759"/>
<dbReference type="PRO" id="PR:P34665"/>
<dbReference type="Proteomes" id="UP000001940">
    <property type="component" value="Chromosome III"/>
</dbReference>
<dbReference type="Bgee" id="WBGene00022786">
    <property type="expression patterns" value="Expressed in larva and 3 other cell types or tissues"/>
</dbReference>
<sequence>MPLPIYKHVSFFCISKCMDKSRNFQPNEGEEEMKKSWVRHEKLCAQLEACSLDLKQNEAQMTILTATGGELKEKHKKIRGLLDEAKANGQQKELEELSKEIENVETQTRIWLNELHDVHDKRVDIDCQMIRLGSEVKKNETYVQLACIDIERMELRHEIRWKKFLQNNPCK</sequence>
<accession>P34665</accession>